<name>CRYAA_SQUAC</name>
<organism>
    <name type="scientific">Squalus acanthias</name>
    <name type="common">Spiny dogfish</name>
    <dbReference type="NCBI Taxonomy" id="7797"/>
    <lineage>
        <taxon>Eukaryota</taxon>
        <taxon>Metazoa</taxon>
        <taxon>Chordata</taxon>
        <taxon>Craniata</taxon>
        <taxon>Vertebrata</taxon>
        <taxon>Chondrichthyes</taxon>
        <taxon>Elasmobranchii</taxon>
        <taxon>Squalomorphii</taxon>
        <taxon>Squaliformes</taxon>
        <taxon>Squalidae</taxon>
        <taxon>Squalus</taxon>
    </lineage>
</organism>
<sequence>MDLAIQYPWFRRSLGSFYPSRLFDQFFGEGLFDYDLFPFFSSTISPYYRQSVFRNFLDSGISEVRSEKDRFMINLNVKHFSPEELSVKIVDDYVEIHGKHAERQEDQGRVSREFHRTYHLPSNLNESAIACSLSNEGLLTLCCPKTRPGDDSNWQDRPIPVSREEKQGTQPEIRADP</sequence>
<keyword id="KW-0007">Acetylation</keyword>
<keyword id="KW-0963">Cytoplasm</keyword>
<keyword id="KW-0903">Direct protein sequencing</keyword>
<keyword id="KW-1015">Disulfide bond</keyword>
<keyword id="KW-0273">Eye lens protein</keyword>
<keyword id="KW-0325">Glycoprotein</keyword>
<keyword id="KW-0479">Metal-binding</keyword>
<keyword id="KW-0539">Nucleus</keyword>
<keyword id="KW-0862">Zinc</keyword>
<evidence type="ECO:0000250" key="1"/>
<evidence type="ECO:0000250" key="2">
    <source>
        <dbReference type="UniProtKB" id="P02470"/>
    </source>
</evidence>
<evidence type="ECO:0000250" key="3">
    <source>
        <dbReference type="UniProtKB" id="P02489"/>
    </source>
</evidence>
<evidence type="ECO:0000255" key="4">
    <source>
        <dbReference type="PROSITE-ProRule" id="PRU00285"/>
    </source>
</evidence>
<evidence type="ECO:0000256" key="5">
    <source>
        <dbReference type="SAM" id="MobiDB-lite"/>
    </source>
</evidence>
<evidence type="ECO:0000269" key="6">
    <source>
    </source>
</evidence>
<proteinExistence type="evidence at protein level"/>
<feature type="chain" id="PRO_0000125905" description="Alpha-crystallin A chain">
    <location>
        <begin position="1"/>
        <end position="177"/>
    </location>
</feature>
<feature type="domain" description="sHSP" evidence="4">
    <location>
        <begin position="52"/>
        <end position="162"/>
    </location>
</feature>
<feature type="region of interest" description="Disordered" evidence="5">
    <location>
        <begin position="146"/>
        <end position="177"/>
    </location>
</feature>
<feature type="compositionally biased region" description="Basic and acidic residues" evidence="5">
    <location>
        <begin position="162"/>
        <end position="177"/>
    </location>
</feature>
<feature type="binding site" evidence="2">
    <location>
        <position position="100"/>
    </location>
    <ligand>
        <name>Zn(2+)</name>
        <dbReference type="ChEBI" id="CHEBI:29105"/>
    </ligand>
</feature>
<feature type="binding site" evidence="2">
    <location>
        <position position="102"/>
    </location>
    <ligand>
        <name>Zn(2+)</name>
        <dbReference type="ChEBI" id="CHEBI:29105"/>
    </ligand>
</feature>
<feature type="modified residue" description="N-acetylmethionine" evidence="6">
    <location>
        <position position="1"/>
    </location>
</feature>
<feature type="glycosylation site" description="O-linked (GlcNAc) serine" evidence="1">
    <location>
        <position position="162"/>
    </location>
</feature>
<feature type="disulfide bond" evidence="3">
    <location>
        <begin position="131"/>
        <end position="142"/>
    </location>
</feature>
<gene>
    <name type="primary">cryaa</name>
</gene>
<dbReference type="PIR" id="A28190">
    <property type="entry name" value="CYDFAA"/>
</dbReference>
<dbReference type="SMR" id="P02509"/>
<dbReference type="GlyCosmos" id="P02509">
    <property type="glycosylation" value="1 site, No reported glycans"/>
</dbReference>
<dbReference type="iPTMnet" id="P02509"/>
<dbReference type="GO" id="GO:0005737">
    <property type="term" value="C:cytoplasm"/>
    <property type="evidence" value="ECO:0007669"/>
    <property type="project" value="UniProtKB-SubCell"/>
</dbReference>
<dbReference type="GO" id="GO:0005634">
    <property type="term" value="C:nucleus"/>
    <property type="evidence" value="ECO:0007669"/>
    <property type="project" value="UniProtKB-SubCell"/>
</dbReference>
<dbReference type="GO" id="GO:0046872">
    <property type="term" value="F:metal ion binding"/>
    <property type="evidence" value="ECO:0007669"/>
    <property type="project" value="UniProtKB-KW"/>
</dbReference>
<dbReference type="GO" id="GO:0005212">
    <property type="term" value="F:structural constituent of eye lens"/>
    <property type="evidence" value="ECO:0007669"/>
    <property type="project" value="UniProtKB-KW"/>
</dbReference>
<dbReference type="GO" id="GO:0051082">
    <property type="term" value="F:unfolded protein binding"/>
    <property type="evidence" value="ECO:0007669"/>
    <property type="project" value="TreeGrafter"/>
</dbReference>
<dbReference type="GO" id="GO:0002088">
    <property type="term" value="P:lens development in camera-type eye"/>
    <property type="evidence" value="ECO:0007669"/>
    <property type="project" value="TreeGrafter"/>
</dbReference>
<dbReference type="GO" id="GO:0043066">
    <property type="term" value="P:negative regulation of apoptotic process"/>
    <property type="evidence" value="ECO:0007669"/>
    <property type="project" value="TreeGrafter"/>
</dbReference>
<dbReference type="GO" id="GO:0042026">
    <property type="term" value="P:protein refolding"/>
    <property type="evidence" value="ECO:0007669"/>
    <property type="project" value="TreeGrafter"/>
</dbReference>
<dbReference type="GO" id="GO:0009408">
    <property type="term" value="P:response to heat"/>
    <property type="evidence" value="ECO:0007669"/>
    <property type="project" value="TreeGrafter"/>
</dbReference>
<dbReference type="Gene3D" id="2.60.40.790">
    <property type="match status" value="1"/>
</dbReference>
<dbReference type="InterPro" id="IPR002068">
    <property type="entry name" value="A-crystallin/Hsp20_dom"/>
</dbReference>
<dbReference type="InterPro" id="IPR055269">
    <property type="entry name" value="Alpha-crystallin/HSP_16"/>
</dbReference>
<dbReference type="InterPro" id="IPR001436">
    <property type="entry name" value="Alpha-crystallin/sHSP_animal"/>
</dbReference>
<dbReference type="InterPro" id="IPR003090">
    <property type="entry name" value="Alpha-crystallin_N"/>
</dbReference>
<dbReference type="InterPro" id="IPR008978">
    <property type="entry name" value="HSP20-like_chaperone"/>
</dbReference>
<dbReference type="PANTHER" id="PTHR45640:SF14">
    <property type="entry name" value="ALPHA-CRYSTALLIN A CHAIN"/>
    <property type="match status" value="1"/>
</dbReference>
<dbReference type="PANTHER" id="PTHR45640">
    <property type="entry name" value="HEAT SHOCK PROTEIN HSP-12.2-RELATED"/>
    <property type="match status" value="1"/>
</dbReference>
<dbReference type="Pfam" id="PF00525">
    <property type="entry name" value="Crystallin"/>
    <property type="match status" value="1"/>
</dbReference>
<dbReference type="Pfam" id="PF00011">
    <property type="entry name" value="HSP20"/>
    <property type="match status" value="1"/>
</dbReference>
<dbReference type="PIRSF" id="PIRSF036514">
    <property type="entry name" value="Sm_HSP_B1"/>
    <property type="match status" value="1"/>
</dbReference>
<dbReference type="PRINTS" id="PR00299">
    <property type="entry name" value="ACRYSTALLIN"/>
</dbReference>
<dbReference type="SUPFAM" id="SSF49764">
    <property type="entry name" value="HSP20-like chaperones"/>
    <property type="match status" value="1"/>
</dbReference>
<dbReference type="PROSITE" id="PS01031">
    <property type="entry name" value="SHSP"/>
    <property type="match status" value="1"/>
</dbReference>
<comment type="function">
    <text evidence="3">Contributes to the transparency and refractive index of the lens. May act as a chaperone, preventing aggregation of various proteins under a wide range of stress conditions.</text>
</comment>
<comment type="subunit">
    <text evidence="3">Heteropolymer composed of three CRYAA and one CRYAB subunits (By similarity). Inter-subunit bridging via zinc ions enhances stability, which is crucial as there is no protein turn over in the lens. Can also form homodimers and homotetramers (dimers of dimers) which serve as the building blocks of homooligomers.</text>
</comment>
<comment type="subcellular location">
    <subcellularLocation>
        <location evidence="3">Cytoplasm</location>
    </subcellularLocation>
    <subcellularLocation>
        <location evidence="3">Nucleus</location>
    </subcellularLocation>
    <text evidence="3">Translocates to the nucleus during heat shock.</text>
</comment>
<comment type="similarity">
    <text evidence="4">Belongs to the small heat shock protein (HSP20) family.</text>
</comment>
<accession>P02509</accession>
<protein>
    <recommendedName>
        <fullName>Alpha-crystallin A chain</fullName>
    </recommendedName>
</protein>
<reference key="1">
    <citation type="journal article" date="1988" name="J. Biol. Chem.">
        <title>Dogfish alpha-crystallin sequences. Comparison with small heat shock proteins and Schistosoma egg antigen.</title>
        <authorList>
            <person name="de Jong W.W."/>
            <person name="Leunissen J.A.M."/>
            <person name="Leenen P.J.M."/>
            <person name="Zweers A."/>
            <person name="Versteeg M."/>
        </authorList>
    </citation>
    <scope>PROTEIN SEQUENCE</scope>
    <scope>ACETYLATION AT MET-1</scope>
</reference>